<sequence>MTKTIGLLVMAYGTPYKESDIEPYYTDIRRGKKPTEEELQDLKDRYEFIGGLSPLAGTTDRQAEALLEALNKEQDDVNFKLYIGLKHISPYIEEAVEQMHNDGIKEAVTVVLAPHYSSFSVGSYDQRAQEKADEYGIQLTHIKHYYQQPKFIKYWTEKINETLEQIPNQEHDETVLVVSAHSLPKGLIERNNDPYPHELHETAEILKQESNIIHVAEGWQSEGNTGTPWLGPDVQDLTRDLYKEHQFKHFIYTPVGFVCEHLEVLYDNDYECKVVCDDIGVNYYRPEMPNTHPLFIGAIVDEIQSHI</sequence>
<gene>
    <name evidence="1" type="primary">cpfC</name>
    <name type="ordered locus">SE_1512</name>
</gene>
<dbReference type="EC" id="4.99.1.9" evidence="1"/>
<dbReference type="EMBL" id="AE015929">
    <property type="protein sequence ID" value="AAO05111.1"/>
    <property type="molecule type" value="Genomic_DNA"/>
</dbReference>
<dbReference type="RefSeq" id="NP_765067.1">
    <property type="nucleotide sequence ID" value="NC_004461.1"/>
</dbReference>
<dbReference type="RefSeq" id="WP_002485187.1">
    <property type="nucleotide sequence ID" value="NC_004461.1"/>
</dbReference>
<dbReference type="SMR" id="Q8CNS1"/>
<dbReference type="KEGG" id="sep:SE_1512"/>
<dbReference type="PATRIC" id="fig|176280.10.peg.1476"/>
<dbReference type="eggNOG" id="COG0276">
    <property type="taxonomic scope" value="Bacteria"/>
</dbReference>
<dbReference type="HOGENOM" id="CLU_018884_2_1_9"/>
<dbReference type="OrthoDB" id="9776380at2"/>
<dbReference type="UniPathway" id="UPA00252"/>
<dbReference type="Proteomes" id="UP000001411">
    <property type="component" value="Chromosome"/>
</dbReference>
<dbReference type="GO" id="GO:0005737">
    <property type="term" value="C:cytoplasm"/>
    <property type="evidence" value="ECO:0007669"/>
    <property type="project" value="UniProtKB-SubCell"/>
</dbReference>
<dbReference type="GO" id="GO:0004325">
    <property type="term" value="F:ferrochelatase activity"/>
    <property type="evidence" value="ECO:0007669"/>
    <property type="project" value="UniProtKB-UniRule"/>
</dbReference>
<dbReference type="GO" id="GO:0046872">
    <property type="term" value="F:metal ion binding"/>
    <property type="evidence" value="ECO:0007669"/>
    <property type="project" value="UniProtKB-KW"/>
</dbReference>
<dbReference type="GO" id="GO:0006783">
    <property type="term" value="P:heme biosynthetic process"/>
    <property type="evidence" value="ECO:0007669"/>
    <property type="project" value="UniProtKB-UniRule"/>
</dbReference>
<dbReference type="CDD" id="cd00419">
    <property type="entry name" value="Ferrochelatase_C"/>
    <property type="match status" value="1"/>
</dbReference>
<dbReference type="CDD" id="cd03411">
    <property type="entry name" value="Ferrochelatase_N"/>
    <property type="match status" value="1"/>
</dbReference>
<dbReference type="FunFam" id="3.40.50.1400:FF:000009">
    <property type="entry name" value="Ferrochelatase"/>
    <property type="match status" value="1"/>
</dbReference>
<dbReference type="Gene3D" id="3.40.50.1400">
    <property type="match status" value="2"/>
</dbReference>
<dbReference type="HAMAP" id="MF_00323">
    <property type="entry name" value="Ferrochelatase"/>
    <property type="match status" value="1"/>
</dbReference>
<dbReference type="InterPro" id="IPR001015">
    <property type="entry name" value="Ferrochelatase"/>
</dbReference>
<dbReference type="InterPro" id="IPR019772">
    <property type="entry name" value="Ferrochelatase_AS"/>
</dbReference>
<dbReference type="InterPro" id="IPR033644">
    <property type="entry name" value="Ferrochelatase_C"/>
</dbReference>
<dbReference type="InterPro" id="IPR033659">
    <property type="entry name" value="Ferrochelatase_N"/>
</dbReference>
<dbReference type="NCBIfam" id="TIGR00109">
    <property type="entry name" value="hemH"/>
    <property type="match status" value="1"/>
</dbReference>
<dbReference type="NCBIfam" id="NF009095">
    <property type="entry name" value="PRK12435.1"/>
    <property type="match status" value="1"/>
</dbReference>
<dbReference type="PANTHER" id="PTHR11108">
    <property type="entry name" value="FERROCHELATASE"/>
    <property type="match status" value="1"/>
</dbReference>
<dbReference type="PANTHER" id="PTHR11108:SF1">
    <property type="entry name" value="FERROCHELATASE, MITOCHONDRIAL"/>
    <property type="match status" value="1"/>
</dbReference>
<dbReference type="Pfam" id="PF00762">
    <property type="entry name" value="Ferrochelatase"/>
    <property type="match status" value="1"/>
</dbReference>
<dbReference type="SUPFAM" id="SSF53800">
    <property type="entry name" value="Chelatase"/>
    <property type="match status" value="1"/>
</dbReference>
<dbReference type="PROSITE" id="PS00534">
    <property type="entry name" value="FERROCHELATASE"/>
    <property type="match status" value="1"/>
</dbReference>
<name>CPFC_STAES</name>
<proteinExistence type="inferred from homology"/>
<accession>Q8CNS1</accession>
<evidence type="ECO:0000255" key="1">
    <source>
        <dbReference type="HAMAP-Rule" id="MF_00323"/>
    </source>
</evidence>
<organism>
    <name type="scientific">Staphylococcus epidermidis (strain ATCC 12228 / FDA PCI 1200)</name>
    <dbReference type="NCBI Taxonomy" id="176280"/>
    <lineage>
        <taxon>Bacteria</taxon>
        <taxon>Bacillati</taxon>
        <taxon>Bacillota</taxon>
        <taxon>Bacilli</taxon>
        <taxon>Bacillales</taxon>
        <taxon>Staphylococcaceae</taxon>
        <taxon>Staphylococcus</taxon>
    </lineage>
</organism>
<protein>
    <recommendedName>
        <fullName evidence="1">Coproporphyrin III ferrochelatase</fullName>
        <ecNumber evidence="1">4.99.1.9</ecNumber>
    </recommendedName>
</protein>
<reference key="1">
    <citation type="journal article" date="2003" name="Mol. Microbiol.">
        <title>Genome-based analysis of virulence genes in a non-biofilm-forming Staphylococcus epidermidis strain (ATCC 12228).</title>
        <authorList>
            <person name="Zhang Y.-Q."/>
            <person name="Ren S.-X."/>
            <person name="Li H.-L."/>
            <person name="Wang Y.-X."/>
            <person name="Fu G."/>
            <person name="Yang J."/>
            <person name="Qin Z.-Q."/>
            <person name="Miao Y.-G."/>
            <person name="Wang W.-Y."/>
            <person name="Chen R.-S."/>
            <person name="Shen Y."/>
            <person name="Chen Z."/>
            <person name="Yuan Z.-H."/>
            <person name="Zhao G.-P."/>
            <person name="Qu D."/>
            <person name="Danchin A."/>
            <person name="Wen Y.-M."/>
        </authorList>
    </citation>
    <scope>NUCLEOTIDE SEQUENCE [LARGE SCALE GENOMIC DNA]</scope>
    <source>
        <strain>ATCC 12228 / FDA PCI 1200</strain>
    </source>
</reference>
<keyword id="KW-0963">Cytoplasm</keyword>
<keyword id="KW-0350">Heme biosynthesis</keyword>
<keyword id="KW-0408">Iron</keyword>
<keyword id="KW-0456">Lyase</keyword>
<keyword id="KW-0479">Metal-binding</keyword>
<keyword id="KW-0627">Porphyrin biosynthesis</keyword>
<comment type="function">
    <text evidence="1">Involved in coproporphyrin-dependent heme b biosynthesis. Catalyzes the insertion of ferrous iron into coproporphyrin III to form Fe-coproporphyrin III.</text>
</comment>
<comment type="catalytic activity">
    <reaction evidence="1">
        <text>Fe-coproporphyrin III + 2 H(+) = coproporphyrin III + Fe(2+)</text>
        <dbReference type="Rhea" id="RHEA:49572"/>
        <dbReference type="ChEBI" id="CHEBI:15378"/>
        <dbReference type="ChEBI" id="CHEBI:29033"/>
        <dbReference type="ChEBI" id="CHEBI:68438"/>
        <dbReference type="ChEBI" id="CHEBI:131725"/>
        <dbReference type="EC" id="4.99.1.9"/>
    </reaction>
    <physiologicalReaction direction="right-to-left" evidence="1">
        <dbReference type="Rhea" id="RHEA:49574"/>
    </physiologicalReaction>
</comment>
<comment type="pathway">
    <text evidence="1">Porphyrin-containing compound metabolism; protoheme biosynthesis.</text>
</comment>
<comment type="subcellular location">
    <subcellularLocation>
        <location evidence="1">Cytoplasm</location>
    </subcellularLocation>
</comment>
<comment type="similarity">
    <text evidence="1">Belongs to the ferrochelatase family.</text>
</comment>
<feature type="chain" id="PRO_0000175207" description="Coproporphyrin III ferrochelatase">
    <location>
        <begin position="1"/>
        <end position="307"/>
    </location>
</feature>
<feature type="binding site" description="axial binding residue" evidence="1">
    <location>
        <position position="12"/>
    </location>
    <ligand>
        <name>Fe-coproporphyrin III</name>
        <dbReference type="ChEBI" id="CHEBI:68438"/>
    </ligand>
    <ligandPart>
        <name>Fe</name>
        <dbReference type="ChEBI" id="CHEBI:18248"/>
    </ligandPart>
</feature>
<feature type="binding site" evidence="1">
    <location>
        <position position="29"/>
    </location>
    <ligand>
        <name>Fe-coproporphyrin III</name>
        <dbReference type="ChEBI" id="CHEBI:68438"/>
    </ligand>
</feature>
<feature type="binding site" evidence="1">
    <location>
        <begin position="45"/>
        <end position="46"/>
    </location>
    <ligand>
        <name>Fe-coproporphyrin III</name>
        <dbReference type="ChEBI" id="CHEBI:68438"/>
    </ligand>
</feature>
<feature type="binding site" evidence="1">
    <location>
        <position position="53"/>
    </location>
    <ligand>
        <name>Fe-coproporphyrin III</name>
        <dbReference type="ChEBI" id="CHEBI:68438"/>
    </ligand>
</feature>
<feature type="binding site" evidence="1">
    <location>
        <position position="124"/>
    </location>
    <ligand>
        <name>Fe-coproporphyrin III</name>
        <dbReference type="ChEBI" id="CHEBI:68438"/>
    </ligand>
</feature>
<feature type="binding site" evidence="1">
    <location>
        <position position="181"/>
    </location>
    <ligand>
        <name>Fe(2+)</name>
        <dbReference type="ChEBI" id="CHEBI:29033"/>
    </ligand>
</feature>
<feature type="binding site" evidence="1">
    <location>
        <position position="263"/>
    </location>
    <ligand>
        <name>Fe(2+)</name>
        <dbReference type="ChEBI" id="CHEBI:29033"/>
    </ligand>
</feature>